<sequence>MLLSDRDLRAEISSGRLGIDPFDDTLVQPSSIDVRLDCLFRVFNNTRYTHIDPAKQQDELTSLVQPVDGEPFVLHPGEFVLGSTLELFTLPDNLAGRLEGKSSLGRLGLLTHSTAGFIDPGFSGHITLELSNVANLPITLWPGMKIGQLCMLRLTSPSEHPYGSSRAGSKYQGQRGPTPSRSYQNFIRST</sequence>
<proteinExistence type="inferred from homology"/>
<reference key="1">
    <citation type="journal article" date="2008" name="PLoS ONE">
        <title>Genetic basis of virulence attenuation revealed by comparative genomic analysis of Mycobacterium tuberculosis strain H37Ra versus H37Rv.</title>
        <authorList>
            <person name="Zheng H."/>
            <person name="Lu L."/>
            <person name="Wang B."/>
            <person name="Pu S."/>
            <person name="Zhang X."/>
            <person name="Zhu G."/>
            <person name="Shi W."/>
            <person name="Zhang L."/>
            <person name="Wang H."/>
            <person name="Wang S."/>
            <person name="Zhao G."/>
            <person name="Zhang Y."/>
        </authorList>
    </citation>
    <scope>NUCLEOTIDE SEQUENCE [LARGE SCALE GENOMIC DNA]</scope>
    <source>
        <strain>ATCC 25177 / H37Ra</strain>
    </source>
</reference>
<feature type="chain" id="PRO_1000009763" description="dCTP deaminase, dUMP-forming">
    <location>
        <begin position="1"/>
        <end position="190"/>
    </location>
</feature>
<feature type="region of interest" description="Disordered" evidence="2">
    <location>
        <begin position="160"/>
        <end position="190"/>
    </location>
</feature>
<feature type="compositionally biased region" description="Polar residues" evidence="2">
    <location>
        <begin position="171"/>
        <end position="190"/>
    </location>
</feature>
<feature type="active site" description="Proton donor/acceptor" evidence="1">
    <location>
        <position position="129"/>
    </location>
</feature>
<feature type="binding site" evidence="1">
    <location>
        <begin position="101"/>
        <end position="106"/>
    </location>
    <ligand>
        <name>dCTP</name>
        <dbReference type="ChEBI" id="CHEBI:61481"/>
    </ligand>
</feature>
<feature type="binding site" evidence="1">
    <location>
        <position position="119"/>
    </location>
    <ligand>
        <name>dCTP</name>
        <dbReference type="ChEBI" id="CHEBI:61481"/>
    </ligand>
</feature>
<feature type="binding site" evidence="1">
    <location>
        <begin position="127"/>
        <end position="129"/>
    </location>
    <ligand>
        <name>dCTP</name>
        <dbReference type="ChEBI" id="CHEBI:61481"/>
    </ligand>
</feature>
<feature type="binding site" evidence="1">
    <location>
        <position position="148"/>
    </location>
    <ligand>
        <name>dCTP</name>
        <dbReference type="ChEBI" id="CHEBI:61481"/>
    </ligand>
</feature>
<feature type="binding site" evidence="1">
    <location>
        <position position="162"/>
    </location>
    <ligand>
        <name>dCTP</name>
        <dbReference type="ChEBI" id="CHEBI:61481"/>
    </ligand>
</feature>
<feature type="binding site" evidence="1">
    <location>
        <position position="170"/>
    </location>
    <ligand>
        <name>dCTP</name>
        <dbReference type="ChEBI" id="CHEBI:61481"/>
    </ligand>
</feature>
<feature type="binding site" evidence="1">
    <location>
        <position position="174"/>
    </location>
    <ligand>
        <name>dCTP</name>
        <dbReference type="ChEBI" id="CHEBI:61481"/>
    </ligand>
</feature>
<feature type="site" description="Important for bifunctional activity" evidence="1">
    <location>
        <begin position="116"/>
        <end position="117"/>
    </location>
</feature>
<evidence type="ECO:0000255" key="1">
    <source>
        <dbReference type="HAMAP-Rule" id="MF_00146"/>
    </source>
</evidence>
<evidence type="ECO:0000256" key="2">
    <source>
        <dbReference type="SAM" id="MobiDB-lite"/>
    </source>
</evidence>
<organism>
    <name type="scientific">Mycobacterium tuberculosis (strain ATCC 25177 / H37Ra)</name>
    <dbReference type="NCBI Taxonomy" id="419947"/>
    <lineage>
        <taxon>Bacteria</taxon>
        <taxon>Bacillati</taxon>
        <taxon>Actinomycetota</taxon>
        <taxon>Actinomycetes</taxon>
        <taxon>Mycobacteriales</taxon>
        <taxon>Mycobacteriaceae</taxon>
        <taxon>Mycobacterium</taxon>
        <taxon>Mycobacterium tuberculosis complex</taxon>
    </lineage>
</organism>
<keyword id="KW-0378">Hydrolase</keyword>
<keyword id="KW-0546">Nucleotide metabolism</keyword>
<keyword id="KW-0547">Nucleotide-binding</keyword>
<keyword id="KW-1185">Reference proteome</keyword>
<dbReference type="EC" id="3.5.4.30" evidence="1"/>
<dbReference type="EMBL" id="CP000611">
    <property type="protein sequence ID" value="ABQ72048.1"/>
    <property type="molecule type" value="Genomic_DNA"/>
</dbReference>
<dbReference type="RefSeq" id="WP_003898399.1">
    <property type="nucleotide sequence ID" value="NZ_CP016972.1"/>
</dbReference>
<dbReference type="SMR" id="A5TZ48"/>
<dbReference type="GeneID" id="45424289"/>
<dbReference type="KEGG" id="mra:MRA_0330"/>
<dbReference type="eggNOG" id="COG0717">
    <property type="taxonomic scope" value="Bacteria"/>
</dbReference>
<dbReference type="HOGENOM" id="CLU_087476_2_0_11"/>
<dbReference type="UniPathway" id="UPA00610">
    <property type="reaction ID" value="UER00667"/>
</dbReference>
<dbReference type="Proteomes" id="UP000001988">
    <property type="component" value="Chromosome"/>
</dbReference>
<dbReference type="GO" id="GO:0033973">
    <property type="term" value="F:dCTP deaminase (dUMP-forming) activity"/>
    <property type="evidence" value="ECO:0007669"/>
    <property type="project" value="UniProtKB-UniRule"/>
</dbReference>
<dbReference type="GO" id="GO:0008829">
    <property type="term" value="F:dCTP deaminase activity"/>
    <property type="evidence" value="ECO:0007669"/>
    <property type="project" value="InterPro"/>
</dbReference>
<dbReference type="GO" id="GO:0000166">
    <property type="term" value="F:nucleotide binding"/>
    <property type="evidence" value="ECO:0007669"/>
    <property type="project" value="UniProtKB-KW"/>
</dbReference>
<dbReference type="GO" id="GO:0006226">
    <property type="term" value="P:dUMP biosynthetic process"/>
    <property type="evidence" value="ECO:0007669"/>
    <property type="project" value="UniProtKB-UniRule"/>
</dbReference>
<dbReference type="GO" id="GO:0006229">
    <property type="term" value="P:dUTP biosynthetic process"/>
    <property type="evidence" value="ECO:0007669"/>
    <property type="project" value="InterPro"/>
</dbReference>
<dbReference type="GO" id="GO:0015949">
    <property type="term" value="P:nucleobase-containing small molecule interconversion"/>
    <property type="evidence" value="ECO:0007669"/>
    <property type="project" value="TreeGrafter"/>
</dbReference>
<dbReference type="CDD" id="cd07557">
    <property type="entry name" value="trimeric_dUTPase"/>
    <property type="match status" value="1"/>
</dbReference>
<dbReference type="FunFam" id="2.70.40.10:FF:000005">
    <property type="entry name" value="dCTP deaminase, dUMP-forming"/>
    <property type="match status" value="1"/>
</dbReference>
<dbReference type="Gene3D" id="2.70.40.10">
    <property type="match status" value="1"/>
</dbReference>
<dbReference type="HAMAP" id="MF_00146">
    <property type="entry name" value="dCTP_deaminase"/>
    <property type="match status" value="1"/>
</dbReference>
<dbReference type="InterPro" id="IPR011962">
    <property type="entry name" value="dCTP_deaminase"/>
</dbReference>
<dbReference type="InterPro" id="IPR036157">
    <property type="entry name" value="dUTPase-like_sf"/>
</dbReference>
<dbReference type="InterPro" id="IPR033704">
    <property type="entry name" value="dUTPase_trimeric"/>
</dbReference>
<dbReference type="NCBIfam" id="TIGR02274">
    <property type="entry name" value="dCTP_deam"/>
    <property type="match status" value="1"/>
</dbReference>
<dbReference type="PANTHER" id="PTHR42680">
    <property type="entry name" value="DCTP DEAMINASE"/>
    <property type="match status" value="1"/>
</dbReference>
<dbReference type="PANTHER" id="PTHR42680:SF3">
    <property type="entry name" value="DCTP DEAMINASE"/>
    <property type="match status" value="1"/>
</dbReference>
<dbReference type="Pfam" id="PF22769">
    <property type="entry name" value="DCD"/>
    <property type="match status" value="1"/>
</dbReference>
<dbReference type="SUPFAM" id="SSF51283">
    <property type="entry name" value="dUTPase-like"/>
    <property type="match status" value="1"/>
</dbReference>
<accession>A5TZ48</accession>
<comment type="function">
    <text evidence="1">Bifunctional enzyme that catalyzes both the deamination of dCTP to dUTP and the hydrolysis of dUTP to dUMP without releasing the toxic dUTP intermediate.</text>
</comment>
<comment type="catalytic activity">
    <reaction evidence="1">
        <text>dCTP + 2 H2O = dUMP + NH4(+) + diphosphate</text>
        <dbReference type="Rhea" id="RHEA:19205"/>
        <dbReference type="ChEBI" id="CHEBI:15377"/>
        <dbReference type="ChEBI" id="CHEBI:28938"/>
        <dbReference type="ChEBI" id="CHEBI:33019"/>
        <dbReference type="ChEBI" id="CHEBI:61481"/>
        <dbReference type="ChEBI" id="CHEBI:246422"/>
        <dbReference type="EC" id="3.5.4.30"/>
    </reaction>
</comment>
<comment type="pathway">
    <text evidence="1">Pyrimidine metabolism; dUMP biosynthesis; dUMP from dCTP: step 1/1.</text>
</comment>
<comment type="subunit">
    <text evidence="1">Homotrimer.</text>
</comment>
<comment type="similarity">
    <text evidence="1">Belongs to the dCTP deaminase family.</text>
</comment>
<protein>
    <recommendedName>
        <fullName evidence="1">dCTP deaminase, dUMP-forming</fullName>
        <ecNumber evidence="1">3.5.4.30</ecNumber>
    </recommendedName>
    <alternativeName>
        <fullName evidence="1">Bifunctional dCTP deaminase:dUTPase</fullName>
    </alternativeName>
    <alternativeName>
        <fullName evidence="1">DCD-DUT</fullName>
    </alternativeName>
</protein>
<gene>
    <name evidence="1" type="primary">dcd</name>
    <name type="ordered locus">MRA_0330</name>
</gene>
<name>DCDB_MYCTA</name>